<protein>
    <recommendedName>
        <fullName evidence="2">Alpha-ketoglutarate-dependent dioxygenase alkB homolog 3</fullName>
        <ecNumber evidence="2">1.14.11.33</ecNumber>
        <ecNumber evidence="2">1.14.11.54</ecNumber>
    </recommendedName>
    <alternativeName>
        <fullName evidence="2">Alkylated DNA repair protein alkB homolog 3</fullName>
    </alternativeName>
</protein>
<feature type="chain" id="PRO_0000239277" description="Alpha-ketoglutarate-dependent dioxygenase alkB homolog 3">
    <location>
        <begin position="1"/>
        <end position="286"/>
    </location>
</feature>
<feature type="domain" description="Fe2OG dioxygenase" evidence="3">
    <location>
        <begin position="172"/>
        <end position="278"/>
    </location>
</feature>
<feature type="region of interest" description="Disordered" evidence="4">
    <location>
        <begin position="1"/>
        <end position="38"/>
    </location>
</feature>
<feature type="compositionally biased region" description="Polar residues" evidence="4">
    <location>
        <begin position="20"/>
        <end position="36"/>
    </location>
</feature>
<feature type="binding site" evidence="1">
    <location>
        <position position="115"/>
    </location>
    <ligand>
        <name>substrate</name>
    </ligand>
</feature>
<feature type="binding site" evidence="1">
    <location>
        <begin position="141"/>
        <end position="143"/>
    </location>
    <ligand>
        <name>substrate</name>
    </ligand>
</feature>
<feature type="binding site" evidence="2">
    <location>
        <begin position="179"/>
        <end position="181"/>
    </location>
    <ligand>
        <name>2-oxoglutarate</name>
        <dbReference type="ChEBI" id="CHEBI:16810"/>
    </ligand>
</feature>
<feature type="binding site" evidence="3">
    <location>
        <position position="191"/>
    </location>
    <ligand>
        <name>Fe cation</name>
        <dbReference type="ChEBI" id="CHEBI:24875"/>
        <note>catalytic</note>
    </ligand>
</feature>
<feature type="binding site" evidence="3">
    <location>
        <position position="193"/>
    </location>
    <ligand>
        <name>Fe cation</name>
        <dbReference type="ChEBI" id="CHEBI:24875"/>
        <note>catalytic</note>
    </ligand>
</feature>
<feature type="binding site" evidence="1">
    <location>
        <position position="194"/>
    </location>
    <ligand>
        <name>substrate</name>
    </ligand>
</feature>
<feature type="binding site" evidence="3">
    <location>
        <position position="257"/>
    </location>
    <ligand>
        <name>Fe cation</name>
        <dbReference type="ChEBI" id="CHEBI:24875"/>
        <note>catalytic</note>
    </ligand>
</feature>
<feature type="binding site" evidence="2">
    <location>
        <begin position="269"/>
        <end position="275"/>
    </location>
    <ligand>
        <name>2-oxoglutarate</name>
        <dbReference type="ChEBI" id="CHEBI:16810"/>
    </ligand>
</feature>
<feature type="binding site" evidence="2">
    <location>
        <position position="275"/>
    </location>
    <ligand>
        <name>2-oxoglutarate</name>
        <dbReference type="ChEBI" id="CHEBI:16810"/>
    </ligand>
</feature>
<feature type="modified residue" description="(4R)-5-hydroxyleucine; alternate" evidence="2">
    <location>
        <position position="177"/>
    </location>
</feature>
<feature type="modified residue" description="(4R)-5-oxoleucine; alternate" evidence="2">
    <location>
        <position position="177"/>
    </location>
</feature>
<gene>
    <name evidence="2" type="primary">ALKBH3</name>
    <name evidence="2" type="synonym">ABH3</name>
</gene>
<proteinExistence type="evidence at transcript level"/>
<organism>
    <name type="scientific">Bos taurus</name>
    <name type="common">Bovine</name>
    <dbReference type="NCBI Taxonomy" id="9913"/>
    <lineage>
        <taxon>Eukaryota</taxon>
        <taxon>Metazoa</taxon>
        <taxon>Chordata</taxon>
        <taxon>Craniata</taxon>
        <taxon>Vertebrata</taxon>
        <taxon>Euteleostomi</taxon>
        <taxon>Mammalia</taxon>
        <taxon>Eutheria</taxon>
        <taxon>Laurasiatheria</taxon>
        <taxon>Artiodactyla</taxon>
        <taxon>Ruminantia</taxon>
        <taxon>Pecora</taxon>
        <taxon>Bovidae</taxon>
        <taxon>Bovinae</taxon>
        <taxon>Bos</taxon>
    </lineage>
</organism>
<dbReference type="EC" id="1.14.11.33" evidence="2"/>
<dbReference type="EC" id="1.14.11.54" evidence="2"/>
<dbReference type="EMBL" id="BC109832">
    <property type="protein sequence ID" value="AAI09833.1"/>
    <property type="molecule type" value="mRNA"/>
</dbReference>
<dbReference type="RefSeq" id="NP_001032691.1">
    <property type="nucleotide sequence ID" value="NM_001037602.2"/>
</dbReference>
<dbReference type="RefSeq" id="XP_005216512.1">
    <property type="nucleotide sequence ID" value="XM_005216455.5"/>
</dbReference>
<dbReference type="SMR" id="Q32L00"/>
<dbReference type="FunCoup" id="Q32L00">
    <property type="interactions" value="1525"/>
</dbReference>
<dbReference type="STRING" id="9913.ENSBTAP00000062402"/>
<dbReference type="PaxDb" id="9913-ENSBTAP00000012522"/>
<dbReference type="Ensembl" id="ENSBTAT00000012522.4">
    <property type="protein sequence ID" value="ENSBTAP00000012522.3"/>
    <property type="gene ID" value="ENSBTAG00000009518.5"/>
</dbReference>
<dbReference type="GeneID" id="514579"/>
<dbReference type="KEGG" id="bta:514579"/>
<dbReference type="CTD" id="221120"/>
<dbReference type="VEuPathDB" id="HostDB:ENSBTAG00000009518"/>
<dbReference type="VGNC" id="VGNC:25834">
    <property type="gene designation" value="ALKBH3"/>
</dbReference>
<dbReference type="eggNOG" id="ENOG502QW9E">
    <property type="taxonomic scope" value="Eukaryota"/>
</dbReference>
<dbReference type="GeneTree" id="ENSGT00940000157226"/>
<dbReference type="HOGENOM" id="CLU_048788_2_1_1"/>
<dbReference type="InParanoid" id="Q32L00"/>
<dbReference type="OMA" id="FEFHQPT"/>
<dbReference type="OrthoDB" id="545910at2759"/>
<dbReference type="TreeFam" id="TF331732"/>
<dbReference type="Proteomes" id="UP000009136">
    <property type="component" value="Chromosome 15"/>
</dbReference>
<dbReference type="Bgee" id="ENSBTAG00000009518">
    <property type="expression patterns" value="Expressed in gluteus medius and 104 other cell types or tissues"/>
</dbReference>
<dbReference type="GO" id="GO:0005829">
    <property type="term" value="C:cytosol"/>
    <property type="evidence" value="ECO:0007669"/>
    <property type="project" value="Ensembl"/>
</dbReference>
<dbReference type="GO" id="GO:0005739">
    <property type="term" value="C:mitochondrion"/>
    <property type="evidence" value="ECO:0000318"/>
    <property type="project" value="GO_Central"/>
</dbReference>
<dbReference type="GO" id="GO:0005654">
    <property type="term" value="C:nucleoplasm"/>
    <property type="evidence" value="ECO:0000318"/>
    <property type="project" value="GO_Central"/>
</dbReference>
<dbReference type="GO" id="GO:0035516">
    <property type="term" value="F:broad specificity oxidative DNA demethylase activity"/>
    <property type="evidence" value="ECO:0000250"/>
    <property type="project" value="UniProtKB"/>
</dbReference>
<dbReference type="GO" id="GO:0008198">
    <property type="term" value="F:ferrous iron binding"/>
    <property type="evidence" value="ECO:0000250"/>
    <property type="project" value="UniProtKB"/>
</dbReference>
<dbReference type="GO" id="GO:1990930">
    <property type="term" value="F:mRNA N1-methyladenosine dioxygenase activity"/>
    <property type="evidence" value="ECO:0000250"/>
    <property type="project" value="UniProtKB"/>
</dbReference>
<dbReference type="GO" id="GO:0008283">
    <property type="term" value="P:cell population proliferation"/>
    <property type="evidence" value="ECO:0000250"/>
    <property type="project" value="UniProtKB"/>
</dbReference>
<dbReference type="GO" id="GO:0006307">
    <property type="term" value="P:DNA alkylation repair"/>
    <property type="evidence" value="ECO:0007669"/>
    <property type="project" value="Ensembl"/>
</dbReference>
<dbReference type="GO" id="GO:0006281">
    <property type="term" value="P:DNA repair"/>
    <property type="evidence" value="ECO:0000318"/>
    <property type="project" value="GO_Central"/>
</dbReference>
<dbReference type="GO" id="GO:2000766">
    <property type="term" value="P:negative regulation of cytoplasmic translation"/>
    <property type="evidence" value="ECO:0007669"/>
    <property type="project" value="Ensembl"/>
</dbReference>
<dbReference type="FunFam" id="2.60.120.590:FF:000003">
    <property type="entry name" value="alpha-ketoglutarate-dependent dioxygenase alkB homolog 3"/>
    <property type="match status" value="1"/>
</dbReference>
<dbReference type="Gene3D" id="2.60.120.590">
    <property type="entry name" value="Alpha-ketoglutarate-dependent dioxygenase AlkB-like"/>
    <property type="match status" value="1"/>
</dbReference>
<dbReference type="InterPro" id="IPR027450">
    <property type="entry name" value="AlkB-like"/>
</dbReference>
<dbReference type="InterPro" id="IPR037151">
    <property type="entry name" value="AlkB-like_sf"/>
</dbReference>
<dbReference type="InterPro" id="IPR032854">
    <property type="entry name" value="ALKBH3"/>
</dbReference>
<dbReference type="InterPro" id="IPR005123">
    <property type="entry name" value="Oxoglu/Fe-dep_dioxygenase_dom"/>
</dbReference>
<dbReference type="PANTHER" id="PTHR31212">
    <property type="entry name" value="ALPHA-KETOGLUTARATE-DEPENDENT DIOXYGENASE ALKB HOMOLOG 3"/>
    <property type="match status" value="1"/>
</dbReference>
<dbReference type="PANTHER" id="PTHR31212:SF4">
    <property type="entry name" value="ALPHA-KETOGLUTARATE-DEPENDENT DIOXYGENASE ALKB HOMOLOG 3"/>
    <property type="match status" value="1"/>
</dbReference>
<dbReference type="Pfam" id="PF13532">
    <property type="entry name" value="2OG-FeII_Oxy_2"/>
    <property type="match status" value="1"/>
</dbReference>
<dbReference type="SUPFAM" id="SSF51197">
    <property type="entry name" value="Clavaminate synthase-like"/>
    <property type="match status" value="1"/>
</dbReference>
<dbReference type="PROSITE" id="PS51471">
    <property type="entry name" value="FE2OG_OXY"/>
    <property type="match status" value="1"/>
</dbReference>
<keyword id="KW-0963">Cytoplasm</keyword>
<keyword id="KW-0223">Dioxygenase</keyword>
<keyword id="KW-0227">DNA damage</keyword>
<keyword id="KW-0234">DNA repair</keyword>
<keyword id="KW-0379">Hydroxylation</keyword>
<keyword id="KW-0408">Iron</keyword>
<keyword id="KW-0479">Metal-binding</keyword>
<keyword id="KW-0539">Nucleus</keyword>
<keyword id="KW-0558">Oxidation</keyword>
<keyword id="KW-0560">Oxidoreductase</keyword>
<keyword id="KW-1185">Reference proteome</keyword>
<keyword id="KW-0832">Ubl conjugation</keyword>
<evidence type="ECO:0000250" key="1">
    <source>
        <dbReference type="UniProtKB" id="Q6NS38"/>
    </source>
</evidence>
<evidence type="ECO:0000250" key="2">
    <source>
        <dbReference type="UniProtKB" id="Q96Q83"/>
    </source>
</evidence>
<evidence type="ECO:0000255" key="3">
    <source>
        <dbReference type="PROSITE-ProRule" id="PRU00805"/>
    </source>
</evidence>
<evidence type="ECO:0000256" key="4">
    <source>
        <dbReference type="SAM" id="MobiDB-lite"/>
    </source>
</evidence>
<evidence type="ECO:0000305" key="5"/>
<name>ALKB3_BOVIN</name>
<accession>Q32L00</accession>
<comment type="function">
    <text evidence="2">Dioxygenase that mediates demethylation of DNA and RNA containing 1-methyladenosine (m1A). Repairs alkylated DNA containing 1-methyladenosine (m1A) and 3-methylcytosine (m3C) by oxidative demethylation. Has a strong preference for single-stranded DNA. Able to process alkylated m3C within double-stranded regions via its interaction with ASCC3, which promotes DNA unwinding to generate single-stranded substrate needed for ALKBH3. Can repair exocyclic 3,N4-ethenocytosine adducs in single-stranded DNA. Also acts on RNA. Demethylates N(1)-methyladenosine (m1A) RNA, an epigenetic internal modification of messenger RNAs (mRNAs) highly enriched within 5'-untranslated regions (UTRs) and in the vicinity of start codons. Requires molecular oxygen, alpha-ketoglutarate and iron.</text>
</comment>
<comment type="catalytic activity">
    <reaction evidence="2">
        <text>an N(1)-methyladenosine in mRNA + 2-oxoglutarate + O2 = an adenosine in mRNA + formaldehyde + succinate + CO2</text>
        <dbReference type="Rhea" id="RHEA:49516"/>
        <dbReference type="Rhea" id="RHEA-COMP:12414"/>
        <dbReference type="Rhea" id="RHEA-COMP:12415"/>
        <dbReference type="ChEBI" id="CHEBI:15379"/>
        <dbReference type="ChEBI" id="CHEBI:16526"/>
        <dbReference type="ChEBI" id="CHEBI:16810"/>
        <dbReference type="ChEBI" id="CHEBI:16842"/>
        <dbReference type="ChEBI" id="CHEBI:30031"/>
        <dbReference type="ChEBI" id="CHEBI:74411"/>
        <dbReference type="ChEBI" id="CHEBI:74491"/>
        <dbReference type="EC" id="1.14.11.54"/>
    </reaction>
</comment>
<comment type="catalytic activity">
    <reaction evidence="2">
        <text>a methylated nucleobase within DNA + 2-oxoglutarate + O2 = a nucleobase within DNA + formaldehyde + succinate + CO2</text>
        <dbReference type="Rhea" id="RHEA:30299"/>
        <dbReference type="Rhea" id="RHEA-COMP:12192"/>
        <dbReference type="Rhea" id="RHEA-COMP:12193"/>
        <dbReference type="ChEBI" id="CHEBI:15379"/>
        <dbReference type="ChEBI" id="CHEBI:16526"/>
        <dbReference type="ChEBI" id="CHEBI:16810"/>
        <dbReference type="ChEBI" id="CHEBI:16842"/>
        <dbReference type="ChEBI" id="CHEBI:30031"/>
        <dbReference type="ChEBI" id="CHEBI:32875"/>
        <dbReference type="ChEBI" id="CHEBI:64428"/>
        <dbReference type="EC" id="1.14.11.33"/>
    </reaction>
    <physiologicalReaction direction="left-to-right" evidence="2">
        <dbReference type="Rhea" id="RHEA:30300"/>
    </physiologicalReaction>
</comment>
<comment type="catalytic activity">
    <reaction evidence="2">
        <text>an N(1)-methyl-2'-deoxyadenosine in single-stranded DNA + 2-oxoglutarate + O2 = a 2'-deoxyadenosine in single-stranded DNA + formaldehyde + succinate + CO2 + H(+)</text>
        <dbReference type="Rhea" id="RHEA:70447"/>
        <dbReference type="Rhea" id="RHEA-COMP:17895"/>
        <dbReference type="Rhea" id="RHEA-COMP:17896"/>
        <dbReference type="ChEBI" id="CHEBI:15378"/>
        <dbReference type="ChEBI" id="CHEBI:15379"/>
        <dbReference type="ChEBI" id="CHEBI:16526"/>
        <dbReference type="ChEBI" id="CHEBI:16810"/>
        <dbReference type="ChEBI" id="CHEBI:16842"/>
        <dbReference type="ChEBI" id="CHEBI:30031"/>
        <dbReference type="ChEBI" id="CHEBI:90615"/>
        <dbReference type="ChEBI" id="CHEBI:139096"/>
    </reaction>
    <physiologicalReaction direction="left-to-right" evidence="2">
        <dbReference type="Rhea" id="RHEA:70448"/>
    </physiologicalReaction>
</comment>
<comment type="catalytic activity">
    <reaction evidence="2">
        <text>an N(3)-methyl-2'-deoxycytidine in single-stranded DNA + 2-oxoglutarate + O2 = a 2'-deoxycytidine in single-stranded DNA + formaldehyde + succinate + CO2 + H(+)</text>
        <dbReference type="Rhea" id="RHEA:70435"/>
        <dbReference type="Rhea" id="RHEA-COMP:12846"/>
        <dbReference type="Rhea" id="RHEA-COMP:17894"/>
        <dbReference type="ChEBI" id="CHEBI:15378"/>
        <dbReference type="ChEBI" id="CHEBI:15379"/>
        <dbReference type="ChEBI" id="CHEBI:16526"/>
        <dbReference type="ChEBI" id="CHEBI:16810"/>
        <dbReference type="ChEBI" id="CHEBI:16842"/>
        <dbReference type="ChEBI" id="CHEBI:30031"/>
        <dbReference type="ChEBI" id="CHEBI:85452"/>
        <dbReference type="ChEBI" id="CHEBI:139075"/>
    </reaction>
    <physiologicalReaction direction="left-to-right" evidence="2">
        <dbReference type="Rhea" id="RHEA:70436"/>
    </physiologicalReaction>
</comment>
<comment type="catalytic activity">
    <reaction evidence="2">
        <text>a 3,N(4)-etheno-2'-deoxycytidine in single-stranded DNA + 2-oxoglutarate + O2 + H2O = a 2'-deoxycytidine in single-stranded DNA + glyoxal + succinate + CO2</text>
        <dbReference type="Rhea" id="RHEA:70471"/>
        <dbReference type="Rhea" id="RHEA-COMP:12846"/>
        <dbReference type="Rhea" id="RHEA-COMP:17906"/>
        <dbReference type="ChEBI" id="CHEBI:15377"/>
        <dbReference type="ChEBI" id="CHEBI:15379"/>
        <dbReference type="ChEBI" id="CHEBI:16526"/>
        <dbReference type="ChEBI" id="CHEBI:16810"/>
        <dbReference type="ChEBI" id="CHEBI:30031"/>
        <dbReference type="ChEBI" id="CHEBI:34779"/>
        <dbReference type="ChEBI" id="CHEBI:85452"/>
        <dbReference type="ChEBI" id="CHEBI:189585"/>
    </reaction>
    <physiologicalReaction direction="left-to-right" evidence="2">
        <dbReference type="Rhea" id="RHEA:70472"/>
    </physiologicalReaction>
</comment>
<comment type="cofactor">
    <cofactor evidence="2">
        <name>Fe(2+)</name>
        <dbReference type="ChEBI" id="CHEBI:29033"/>
    </cofactor>
    <text evidence="2">Binds 1 Fe(2+) ion per subunit.</text>
</comment>
<comment type="activity regulation">
    <text evidence="2">Activated by ascorbate.</text>
</comment>
<comment type="subunit">
    <text evidence="2">Interacts with the ASCC complex composed of ASCC1, ASCC2 and ASCC3. Interacts directly with ASCC3, and is thereby recruited to the ASCC complex. Interacts with OTUD4; the interaction is direct. Interacts with USP7 and USP9X.</text>
</comment>
<comment type="subcellular location">
    <subcellularLocation>
        <location evidence="2">Nucleus</location>
    </subcellularLocation>
    <subcellularLocation>
        <location evidence="2">Cytoplasm</location>
    </subcellularLocation>
    <text evidence="2">Colocalizes with ASCC2 and ASCC3 in nuclear foci when cells have been exposed to alkylating agents that cause DNA damage. Predominantly localizes to the nucleus.</text>
</comment>
<comment type="PTM">
    <text evidence="2">Ubiquitinated; undergoes 'Lys-48'-linked polyubiquitination. OTUD4 promotes USP7 and USP9X-dependent deubiquitination of 'Lys-48'-polyubiquitinated ALKBH3 promoting the repair of alkylated DNA lesions.</text>
</comment>
<comment type="similarity">
    <text evidence="5">Belongs to the alkB family.</text>
</comment>
<reference key="1">
    <citation type="submission" date="2005-11" db="EMBL/GenBank/DDBJ databases">
        <authorList>
            <consortium name="NIH - Mammalian Gene Collection (MGC) project"/>
        </authorList>
    </citation>
    <scope>NUCLEOTIDE SEQUENCE [LARGE SCALE MRNA]</scope>
    <source>
        <strain>Crossbred X Angus</strain>
        <tissue>Liver</tissue>
    </source>
</reference>
<sequence length="286" mass="33156">MEDKRRRARVQGAWAGPAKSQATAQPAPTAENNLQQRPGKAWMNKEQHLSDRQFVFKEPQEGVRRAPEPRVIEKEGVYEISMSPTGISRVCLCPGFVDLKEADSVFEQLCRDVPWKQRTGIRDDVTYQQPRLTAWYGELPYTYSRITMEPNPHWHPVLLMLKNQIEENTGHSFNSLLCNLYRNEKDSVDWHSDDEPSLGRCPIIASLSFGATRMFEMRKKPPPEDNGDYTYVERVKIPLDHGTLLIMEGATQADWQHRVPKEYHSREPRINLTFRTVYPDPRGAHW</sequence>